<reference key="1">
    <citation type="journal article" date="1989" name="J. Biol. Chem.">
        <title>Isolation and characterization of the gene and cDNA encoding human mitochondrial creatine kinase.</title>
        <authorList>
            <person name="Haas R.C."/>
            <person name="Korenfeld C."/>
            <person name="Zhang Z."/>
            <person name="Perryman B."/>
            <person name="Roman D."/>
            <person name="Strauss A.W."/>
        </authorList>
    </citation>
    <scope>NUCLEOTIDE SEQUENCE [GENOMIC DNA]</scope>
</reference>
<reference key="2">
    <citation type="submission" date="2003-05" db="EMBL/GenBank/DDBJ databases">
        <title>Cloning of human full-length CDSs in BD Creator(TM) system donor vector.</title>
        <authorList>
            <person name="Kalnine N."/>
            <person name="Chen X."/>
            <person name="Rolfs A."/>
            <person name="Halleck A."/>
            <person name="Hines L."/>
            <person name="Eisenstein S."/>
            <person name="Koundinya M."/>
            <person name="Raphael J."/>
            <person name="Moreira D."/>
            <person name="Kelley T."/>
            <person name="LaBaer J."/>
            <person name="Lin Y."/>
            <person name="Phelan M."/>
            <person name="Farmer A."/>
        </authorList>
    </citation>
    <scope>NUCLEOTIDE SEQUENCE [LARGE SCALE MRNA] (ISOFORM 1)</scope>
</reference>
<reference key="3">
    <citation type="journal article" date="2004" name="Nat. Genet.">
        <title>Complete sequencing and characterization of 21,243 full-length human cDNAs.</title>
        <authorList>
            <person name="Ota T."/>
            <person name="Suzuki Y."/>
            <person name="Nishikawa T."/>
            <person name="Otsuki T."/>
            <person name="Sugiyama T."/>
            <person name="Irie R."/>
            <person name="Wakamatsu A."/>
            <person name="Hayashi K."/>
            <person name="Sato H."/>
            <person name="Nagai K."/>
            <person name="Kimura K."/>
            <person name="Makita H."/>
            <person name="Sekine M."/>
            <person name="Obayashi M."/>
            <person name="Nishi T."/>
            <person name="Shibahara T."/>
            <person name="Tanaka T."/>
            <person name="Ishii S."/>
            <person name="Yamamoto J."/>
            <person name="Saito K."/>
            <person name="Kawai Y."/>
            <person name="Isono Y."/>
            <person name="Nakamura Y."/>
            <person name="Nagahari K."/>
            <person name="Murakami K."/>
            <person name="Yasuda T."/>
            <person name="Iwayanagi T."/>
            <person name="Wagatsuma M."/>
            <person name="Shiratori A."/>
            <person name="Sudo H."/>
            <person name="Hosoiri T."/>
            <person name="Kaku Y."/>
            <person name="Kodaira H."/>
            <person name="Kondo H."/>
            <person name="Sugawara M."/>
            <person name="Takahashi M."/>
            <person name="Kanda K."/>
            <person name="Yokoi T."/>
            <person name="Furuya T."/>
            <person name="Kikkawa E."/>
            <person name="Omura Y."/>
            <person name="Abe K."/>
            <person name="Kamihara K."/>
            <person name="Katsuta N."/>
            <person name="Sato K."/>
            <person name="Tanikawa M."/>
            <person name="Yamazaki M."/>
            <person name="Ninomiya K."/>
            <person name="Ishibashi T."/>
            <person name="Yamashita H."/>
            <person name="Murakawa K."/>
            <person name="Fujimori K."/>
            <person name="Tanai H."/>
            <person name="Kimata M."/>
            <person name="Watanabe M."/>
            <person name="Hiraoka S."/>
            <person name="Chiba Y."/>
            <person name="Ishida S."/>
            <person name="Ono Y."/>
            <person name="Takiguchi S."/>
            <person name="Watanabe S."/>
            <person name="Yosida M."/>
            <person name="Hotuta T."/>
            <person name="Kusano J."/>
            <person name="Kanehori K."/>
            <person name="Takahashi-Fujii A."/>
            <person name="Hara H."/>
            <person name="Tanase T.-O."/>
            <person name="Nomura Y."/>
            <person name="Togiya S."/>
            <person name="Komai F."/>
            <person name="Hara R."/>
            <person name="Takeuchi K."/>
            <person name="Arita M."/>
            <person name="Imose N."/>
            <person name="Musashino K."/>
            <person name="Yuuki H."/>
            <person name="Oshima A."/>
            <person name="Sasaki N."/>
            <person name="Aotsuka S."/>
            <person name="Yoshikawa Y."/>
            <person name="Matsunawa H."/>
            <person name="Ichihara T."/>
            <person name="Shiohata N."/>
            <person name="Sano S."/>
            <person name="Moriya S."/>
            <person name="Momiyama H."/>
            <person name="Satoh N."/>
            <person name="Takami S."/>
            <person name="Terashima Y."/>
            <person name="Suzuki O."/>
            <person name="Nakagawa S."/>
            <person name="Senoh A."/>
            <person name="Mizoguchi H."/>
            <person name="Goto Y."/>
            <person name="Shimizu F."/>
            <person name="Wakebe H."/>
            <person name="Hishigaki H."/>
            <person name="Watanabe T."/>
            <person name="Sugiyama A."/>
            <person name="Takemoto M."/>
            <person name="Kawakami B."/>
            <person name="Yamazaki M."/>
            <person name="Watanabe K."/>
            <person name="Kumagai A."/>
            <person name="Itakura S."/>
            <person name="Fukuzumi Y."/>
            <person name="Fujimori Y."/>
            <person name="Komiyama M."/>
            <person name="Tashiro H."/>
            <person name="Tanigami A."/>
            <person name="Fujiwara T."/>
            <person name="Ono T."/>
            <person name="Yamada K."/>
            <person name="Fujii Y."/>
            <person name="Ozaki K."/>
            <person name="Hirao M."/>
            <person name="Ohmori Y."/>
            <person name="Kawabata A."/>
            <person name="Hikiji T."/>
            <person name="Kobatake N."/>
            <person name="Inagaki H."/>
            <person name="Ikema Y."/>
            <person name="Okamoto S."/>
            <person name="Okitani R."/>
            <person name="Kawakami T."/>
            <person name="Noguchi S."/>
            <person name="Itoh T."/>
            <person name="Shigeta K."/>
            <person name="Senba T."/>
            <person name="Matsumura K."/>
            <person name="Nakajima Y."/>
            <person name="Mizuno T."/>
            <person name="Morinaga M."/>
            <person name="Sasaki M."/>
            <person name="Togashi T."/>
            <person name="Oyama M."/>
            <person name="Hata H."/>
            <person name="Watanabe M."/>
            <person name="Komatsu T."/>
            <person name="Mizushima-Sugano J."/>
            <person name="Satoh T."/>
            <person name="Shirai Y."/>
            <person name="Takahashi Y."/>
            <person name="Nakagawa K."/>
            <person name="Okumura K."/>
            <person name="Nagase T."/>
            <person name="Nomura N."/>
            <person name="Kikuchi H."/>
            <person name="Masuho Y."/>
            <person name="Yamashita R."/>
            <person name="Nakai K."/>
            <person name="Yada T."/>
            <person name="Nakamura Y."/>
            <person name="Ohara O."/>
            <person name="Isogai T."/>
            <person name="Sugano S."/>
        </authorList>
    </citation>
    <scope>NUCLEOTIDE SEQUENCE [LARGE SCALE MRNA] (ISOFORM 2)</scope>
    <source>
        <tissue>Colon</tissue>
        <tissue>Hippocampus</tissue>
    </source>
</reference>
<reference key="4">
    <citation type="submission" date="2005-04" db="EMBL/GenBank/DDBJ databases">
        <authorList>
            <person name="Totoki Y."/>
            <person name="Toyoda A."/>
            <person name="Takeda T."/>
            <person name="Sakaki Y."/>
            <person name="Tanaka A."/>
            <person name="Yokoyama S."/>
        </authorList>
    </citation>
    <scope>NUCLEOTIDE SEQUENCE [LARGE SCALE MRNA] (ISOFORM 1)</scope>
    <source>
        <tissue>Cerebellum</tissue>
    </source>
</reference>
<reference key="5">
    <citation type="journal article" date="2004" name="Genome Res.">
        <title>The status, quality, and expansion of the NIH full-length cDNA project: the Mammalian Gene Collection (MGC).</title>
        <authorList>
            <consortium name="The MGC Project Team"/>
        </authorList>
    </citation>
    <scope>NUCLEOTIDE SEQUENCE [LARGE SCALE MRNA] (ISOFORM 1)</scope>
    <source>
        <tissue>Lung</tissue>
        <tissue>PNS</tissue>
    </source>
</reference>
<reference key="6">
    <citation type="journal article" date="2011" name="BMC Syst. Biol.">
        <title>Initial characterization of the human central proteome.</title>
        <authorList>
            <person name="Burkard T.R."/>
            <person name="Planyavsky M."/>
            <person name="Kaupe I."/>
            <person name="Breitwieser F.P."/>
            <person name="Buerckstuemmer T."/>
            <person name="Bennett K.L."/>
            <person name="Superti-Furga G."/>
            <person name="Colinge J."/>
        </authorList>
    </citation>
    <scope>IDENTIFICATION BY MASS SPECTROMETRY [LARGE SCALE ANALYSIS]</scope>
</reference>
<reference key="7">
    <citation type="journal article" date="2000" name="Proteins">
        <title>Crystal structure of human ubiquitous mitochondrial creatine kinase.</title>
        <authorList>
            <person name="Eder M."/>
            <person name="Fritz-Wolf K."/>
            <person name="Kabsch W."/>
            <person name="Wallimann T."/>
            <person name="Schlattner U."/>
        </authorList>
    </citation>
    <scope>X-RAY CRYSTALLOGRAPHY (2.7 ANGSTROMS) OF 39-417</scope>
    <scope>SUBUNIT</scope>
</reference>
<protein>
    <recommendedName>
        <fullName>Creatine kinase U-type, mitochondrial</fullName>
        <ecNumber>2.7.3.2</ecNumber>
    </recommendedName>
    <alternativeName>
        <fullName>Acidic-type mitochondrial creatine kinase</fullName>
        <shortName>Mia-CK</shortName>
    </alternativeName>
    <alternativeName>
        <fullName>Ubiquitous mitochondrial creatine kinase</fullName>
        <shortName>U-MtCK</shortName>
    </alternativeName>
</protein>
<accession>P12532</accession>
<accession>B4DIT8</accession>
<accession>B7ZA09</accession>
<accession>Q0VAM3</accession>
<accession>Q32NF6</accession>
<accession>Q53FC4</accession>
<comment type="function">
    <text>Reversibly catalyzes the transfer of phosphate between ATP and various phosphogens (e.g. creatine phosphate). Creatine kinase isoenzymes play a central role in energy transduction in tissues with large, fluctuating energy demands, such as skeletal muscle, heart, brain and spermatozoa.</text>
</comment>
<comment type="catalytic activity">
    <reaction evidence="8">
        <text>creatine + ATP = N-phosphocreatine + ADP + H(+)</text>
        <dbReference type="Rhea" id="RHEA:17157"/>
        <dbReference type="ChEBI" id="CHEBI:15378"/>
        <dbReference type="ChEBI" id="CHEBI:30616"/>
        <dbReference type="ChEBI" id="CHEBI:57947"/>
        <dbReference type="ChEBI" id="CHEBI:58092"/>
        <dbReference type="ChEBI" id="CHEBI:456216"/>
        <dbReference type="EC" id="2.7.3.2"/>
    </reaction>
</comment>
<comment type="subunit">
    <text evidence="9">Exists as an octamer composed of four MTCK homodimers.</text>
</comment>
<comment type="interaction">
    <interactant intactId="EBI-1050662">
        <id>P12532</id>
    </interactant>
    <interactant intactId="EBI-745641">
        <id>Q96DX5</id>
        <label>ASB9</label>
    </interactant>
    <organismsDiffer>false</organismsDiffer>
    <experiments>5</experiments>
</comment>
<comment type="interaction">
    <interactant intactId="EBI-1050662">
        <id>P12532</id>
    </interactant>
    <interactant intactId="EBI-4287089">
        <id>P06732</id>
        <label>CKM</label>
    </interactant>
    <organismsDiffer>false</organismsDiffer>
    <experiments>3</experiments>
</comment>
<comment type="interaction">
    <interactant intactId="EBI-1050662">
        <id>P12532</id>
    </interactant>
    <interactant intactId="EBI-712973">
        <id>P17540</id>
        <label>CKMT2</label>
    </interactant>
    <organismsDiffer>false</organismsDiffer>
    <experiments>2</experiments>
</comment>
<comment type="interaction">
    <interactant intactId="EBI-1050662">
        <id>P12532</id>
    </interactant>
    <interactant intactId="EBI-11962928">
        <id>Q9UI47-2</id>
        <label>CTNNA3</label>
    </interactant>
    <organismsDiffer>false</organismsDiffer>
    <experiments>3</experiments>
</comment>
<comment type="interaction">
    <interactant intactId="EBI-1050662">
        <id>P12532</id>
    </interactant>
    <interactant intactId="EBI-12197079">
        <id>P84074</id>
        <label>HPCA</label>
    </interactant>
    <organismsDiffer>false</organismsDiffer>
    <experiments>3</experiments>
</comment>
<comment type="interaction">
    <interactant intactId="EBI-1050662">
        <id>P12532</id>
    </interactant>
    <interactant intactId="EBI-1055254">
        <id>Q8WXH2</id>
        <label>JPH3</label>
    </interactant>
    <organismsDiffer>false</organismsDiffer>
    <experiments>3</experiments>
</comment>
<comment type="interaction">
    <interactant intactId="EBI-1050662">
        <id>P12532</id>
    </interactant>
    <interactant intactId="EBI-591778">
        <id>P61970</id>
        <label>NUTF2</label>
    </interactant>
    <organismsDiffer>false</organismsDiffer>
    <experiments>3</experiments>
</comment>
<comment type="interaction">
    <interactant intactId="EBI-1050662">
        <id>P12532</id>
    </interactant>
    <interactant intactId="EBI-11955379">
        <id>P0CE72</id>
        <label>OCM</label>
    </interactant>
    <organismsDiffer>false</organismsDiffer>
    <experiments>6</experiments>
</comment>
<comment type="interaction">
    <interactant intactId="EBI-1050662">
        <id>P12532</id>
    </interactant>
    <interactant intactId="EBI-710402">
        <id>Q96I34</id>
        <label>PPP1R16A</label>
    </interactant>
    <organismsDiffer>false</organismsDiffer>
    <experiments>3</experiments>
</comment>
<comment type="interaction">
    <interactant intactId="EBI-1050662">
        <id>P12532</id>
    </interactant>
    <interactant intactId="EBI-359720">
        <id>P17980</id>
        <label>PSMC3</label>
    </interactant>
    <organismsDiffer>false</organismsDiffer>
    <experiments>3</experiments>
</comment>
<comment type="interaction">
    <interactant intactId="EBI-1050662">
        <id>P12532</id>
    </interactant>
    <interactant intactId="EBI-712405">
        <id>P48443</id>
        <label>RXRG</label>
    </interactant>
    <organismsDiffer>false</organismsDiffer>
    <experiments>5</experiments>
</comment>
<comment type="interaction">
    <interactant intactId="EBI-1050662">
        <id>P12532</id>
    </interactant>
    <interactant intactId="EBI-720609">
        <id>O76024</id>
        <label>WFS1</label>
    </interactant>
    <organismsDiffer>false</organismsDiffer>
    <experiments>3</experiments>
</comment>
<comment type="subcellular location">
    <subcellularLocation>
        <location>Mitochondrion inner membrane</location>
        <topology>Peripheral membrane protein</topology>
        <orientation>Intermembrane side</orientation>
    </subcellularLocation>
</comment>
<comment type="alternative products">
    <event type="alternative splicing"/>
    <isoform>
        <id>P12532-1</id>
        <name>1</name>
        <sequence type="displayed"/>
    </isoform>
    <isoform>
        <id>P12532-2</id>
        <name>2</name>
        <sequence type="described" ref="VSP_038045"/>
    </isoform>
</comment>
<comment type="miscellaneous">
    <text>Mitochondrial creatine kinase binds cardiolipin.</text>
</comment>
<comment type="similarity">
    <text evidence="6 7">Belongs to the ATP:guanido phosphotransferase family.</text>
</comment>
<organism>
    <name type="scientific">Homo sapiens</name>
    <name type="common">Human</name>
    <dbReference type="NCBI Taxonomy" id="9606"/>
    <lineage>
        <taxon>Eukaryota</taxon>
        <taxon>Metazoa</taxon>
        <taxon>Chordata</taxon>
        <taxon>Craniata</taxon>
        <taxon>Vertebrata</taxon>
        <taxon>Euteleostomi</taxon>
        <taxon>Mammalia</taxon>
        <taxon>Eutheria</taxon>
        <taxon>Euarchontoglires</taxon>
        <taxon>Primates</taxon>
        <taxon>Haplorrhini</taxon>
        <taxon>Catarrhini</taxon>
        <taxon>Hominidae</taxon>
        <taxon>Homo</taxon>
    </lineage>
</organism>
<keyword id="KW-0002">3D-structure</keyword>
<keyword id="KW-0025">Alternative splicing</keyword>
<keyword id="KW-0067">ATP-binding</keyword>
<keyword id="KW-0418">Kinase</keyword>
<keyword id="KW-0472">Membrane</keyword>
<keyword id="KW-0496">Mitochondrion</keyword>
<keyword id="KW-0999">Mitochondrion inner membrane</keyword>
<keyword id="KW-0547">Nucleotide-binding</keyword>
<keyword id="KW-0597">Phosphoprotein</keyword>
<keyword id="KW-1267">Proteomics identification</keyword>
<keyword id="KW-1185">Reference proteome</keyword>
<keyword id="KW-0808">Transferase</keyword>
<keyword id="KW-0809">Transit peptide</keyword>
<feature type="transit peptide" description="Mitochondrion">
    <location>
        <begin position="1"/>
        <end position="39"/>
    </location>
</feature>
<feature type="chain" id="PRO_0000016590" description="Creatine kinase U-type, mitochondrial">
    <location>
        <begin position="40"/>
        <end position="417"/>
    </location>
</feature>
<feature type="domain" description="Phosphagen kinase N-terminal" evidence="6">
    <location>
        <begin position="45"/>
        <end position="131"/>
    </location>
</feature>
<feature type="domain" description="Phosphagen kinase C-terminal" evidence="7">
    <location>
        <begin position="158"/>
        <end position="400"/>
    </location>
</feature>
<feature type="region of interest" description="Cardiolipin-binding" evidence="1">
    <location>
        <begin position="40"/>
        <end position="64"/>
    </location>
</feature>
<feature type="binding site" evidence="7">
    <location>
        <begin position="161"/>
        <end position="165"/>
    </location>
    <ligand>
        <name>ATP</name>
        <dbReference type="ChEBI" id="CHEBI:30616"/>
    </ligand>
</feature>
<feature type="binding site" evidence="7">
    <location>
        <position position="224"/>
    </location>
    <ligand>
        <name>ATP</name>
        <dbReference type="ChEBI" id="CHEBI:30616"/>
    </ligand>
</feature>
<feature type="binding site" evidence="7">
    <location>
        <position position="269"/>
    </location>
    <ligand>
        <name>ATP</name>
        <dbReference type="ChEBI" id="CHEBI:30616"/>
    </ligand>
</feature>
<feature type="binding site" evidence="7">
    <location>
        <position position="325"/>
    </location>
    <ligand>
        <name>ATP</name>
        <dbReference type="ChEBI" id="CHEBI:30616"/>
    </ligand>
</feature>
<feature type="binding site" evidence="7">
    <location>
        <begin position="353"/>
        <end position="358"/>
    </location>
    <ligand>
        <name>ATP</name>
        <dbReference type="ChEBI" id="CHEBI:30616"/>
    </ligand>
</feature>
<feature type="binding site" evidence="7">
    <location>
        <position position="368"/>
    </location>
    <ligand>
        <name>ATP</name>
        <dbReference type="ChEBI" id="CHEBI:30616"/>
    </ligand>
</feature>
<feature type="modified residue" description="Phosphoserine" evidence="4">
    <location>
        <position position="151"/>
    </location>
</feature>
<feature type="modified residue" description="Phosphoserine" evidence="4">
    <location>
        <position position="196"/>
    </location>
</feature>
<feature type="modified residue" description="Phosphothreonine" evidence="2">
    <location>
        <position position="213"/>
    </location>
</feature>
<feature type="modified residue" description="Phosphoserine" evidence="5">
    <location>
        <position position="232"/>
    </location>
</feature>
<feature type="modified residue" description="Phosphothreonine" evidence="3">
    <location>
        <position position="355"/>
    </location>
</feature>
<feature type="splice variant" id="VSP_038045" description="In isoform 2." evidence="10">
    <original>S</original>
    <variation>SQTWPTGQLPGNCTRSRRLCPPSMVTGYPLPS</variation>
    <location>
        <position position="50"/>
    </location>
</feature>
<feature type="sequence conflict" description="In Ref. 3; BAG58600." evidence="11" ref="3">
    <original>P</original>
    <variation>L</variation>
    <location>
        <position position="176"/>
    </location>
</feature>
<feature type="sequence conflict" description="In Ref. 4; BAD97085." evidence="11" ref="4">
    <original>E</original>
    <variation>G</variation>
    <location>
        <position position="401"/>
    </location>
</feature>
<feature type="helix" evidence="12">
    <location>
        <begin position="49"/>
        <end position="52"/>
    </location>
</feature>
<feature type="helix" evidence="12">
    <location>
        <begin position="62"/>
        <end position="66"/>
    </location>
</feature>
<feature type="helix" evidence="12">
    <location>
        <begin position="69"/>
        <end position="75"/>
    </location>
</feature>
<feature type="helix" evidence="12">
    <location>
        <begin position="86"/>
        <end position="95"/>
    </location>
</feature>
<feature type="strand" evidence="12">
    <location>
        <begin position="100"/>
        <end position="102"/>
    </location>
</feature>
<feature type="helix" evidence="12">
    <location>
        <begin position="114"/>
        <end position="117"/>
    </location>
</feature>
<feature type="helix" evidence="12">
    <location>
        <begin position="119"/>
        <end position="129"/>
    </location>
</feature>
<feature type="turn" evidence="12">
    <location>
        <begin position="130"/>
        <end position="132"/>
    </location>
</feature>
<feature type="turn" evidence="12">
    <location>
        <begin position="135"/>
        <end position="137"/>
    </location>
</feature>
<feature type="helix" evidence="12">
    <location>
        <begin position="146"/>
        <end position="148"/>
    </location>
</feature>
<feature type="turn" evidence="12">
    <location>
        <begin position="156"/>
        <end position="158"/>
    </location>
</feature>
<feature type="strand" evidence="12">
    <location>
        <begin position="159"/>
        <end position="168"/>
    </location>
</feature>
<feature type="turn" evidence="12">
    <location>
        <begin position="176"/>
        <end position="178"/>
    </location>
</feature>
<feature type="helix" evidence="12">
    <location>
        <begin position="181"/>
        <end position="195"/>
    </location>
</feature>
<feature type="helix" evidence="12">
    <location>
        <begin position="200"/>
        <end position="202"/>
    </location>
</feature>
<feature type="strand" evidence="12">
    <location>
        <begin position="204"/>
        <end position="208"/>
    </location>
</feature>
<feature type="helix" evidence="12">
    <location>
        <begin position="209"/>
        <end position="211"/>
    </location>
</feature>
<feature type="helix" evidence="12">
    <location>
        <begin position="214"/>
        <end position="222"/>
    </location>
</feature>
<feature type="helix" evidence="12">
    <location>
        <begin position="233"/>
        <end position="236"/>
    </location>
</feature>
<feature type="turn" evidence="12">
    <location>
        <begin position="237"/>
        <end position="247"/>
    </location>
</feature>
<feature type="strand" evidence="12">
    <location>
        <begin position="249"/>
        <end position="253"/>
    </location>
</feature>
<feature type="strand" evidence="12">
    <location>
        <begin position="258"/>
        <end position="277"/>
    </location>
</feature>
<feature type="helix" evidence="12">
    <location>
        <begin position="279"/>
        <end position="298"/>
    </location>
</feature>
<feature type="turn" evidence="12">
    <location>
        <begin position="299"/>
        <end position="301"/>
    </location>
</feature>
<feature type="turn" evidence="12">
    <location>
        <begin position="308"/>
        <end position="310"/>
    </location>
</feature>
<feature type="helix" evidence="12">
    <location>
        <begin position="317"/>
        <end position="319"/>
    </location>
</feature>
<feature type="strand" evidence="12">
    <location>
        <begin position="325"/>
        <end position="331"/>
    </location>
</feature>
<feature type="helix" evidence="12">
    <location>
        <begin position="333"/>
        <end position="337"/>
    </location>
</feature>
<feature type="helix" evidence="12">
    <location>
        <begin position="341"/>
        <end position="348"/>
    </location>
</feature>
<feature type="strand" evidence="12">
    <location>
        <begin position="350"/>
        <end position="353"/>
    </location>
</feature>
<feature type="turn" evidence="12">
    <location>
        <begin position="359"/>
        <end position="361"/>
    </location>
</feature>
<feature type="strand" evidence="12">
    <location>
        <begin position="364"/>
        <end position="372"/>
    </location>
</feature>
<feature type="strand" evidence="12">
    <location>
        <begin position="375"/>
        <end position="377"/>
    </location>
</feature>
<feature type="helix" evidence="12">
    <location>
        <begin position="379"/>
        <end position="400"/>
    </location>
</feature>
<feature type="turn" evidence="12">
    <location>
        <begin position="401"/>
        <end position="403"/>
    </location>
</feature>
<name>KCRU_HUMAN</name>
<proteinExistence type="evidence at protein level"/>
<gene>
    <name type="primary">CKMT1A</name>
    <name type="synonym">CKMT</name>
</gene>
<gene>
    <name type="primary">CKMT1B</name>
    <name type="synonym">CKMT</name>
</gene>
<sequence length="417" mass="47037">MAGPFSRLLSARPGLRLLALAGAGSLAAGFLLRPEPVRAASERRRLYPPSAEYPDLRKHNNCMASHLTPAVYARLCDKTTPTGWTLDQCIQTGVDNPGHPFIKTVGMVAGDEETYEVFADLFDPVIQERHNGYDPRTMKHTTDLDASKIRSGYFDERYVLSSRVRTGRSIRGLSLPPACTRAERREVERVVVDALSGLKGDLAGRYYRLSEMTEAEQQQLIDDHFLFDKPVSPLLTAAGMARDWPDARGIWHNNEKSFLIWVNEEDHTRVISMEKGGNMKRVFERFCRGLKEVERLIQERGWEFMWNERLGYILTCPSNLGTGLRAGVHIKLPLLSKDSRFPKILENLRLQKRGTGGVDTAATGGVFDISNLDRLGKSEVELVQLVIDGVNYLIDCERRLERGQDIRIPTPVIHTKH</sequence>
<evidence type="ECO:0000250" key="1"/>
<evidence type="ECO:0000250" key="2">
    <source>
        <dbReference type="UniProtKB" id="P00564"/>
    </source>
</evidence>
<evidence type="ECO:0000250" key="3">
    <source>
        <dbReference type="UniProtKB" id="P07310"/>
    </source>
</evidence>
<evidence type="ECO:0000250" key="4">
    <source>
        <dbReference type="UniProtKB" id="P25809"/>
    </source>
</evidence>
<evidence type="ECO:0000250" key="5">
    <source>
        <dbReference type="UniProtKB" id="P30275"/>
    </source>
</evidence>
<evidence type="ECO:0000255" key="6">
    <source>
        <dbReference type="PROSITE-ProRule" id="PRU00842"/>
    </source>
</evidence>
<evidence type="ECO:0000255" key="7">
    <source>
        <dbReference type="PROSITE-ProRule" id="PRU00843"/>
    </source>
</evidence>
<evidence type="ECO:0000255" key="8">
    <source>
        <dbReference type="PROSITE-ProRule" id="PRU10029"/>
    </source>
</evidence>
<evidence type="ECO:0000269" key="9">
    <source>
    </source>
</evidence>
<evidence type="ECO:0000303" key="10">
    <source>
    </source>
</evidence>
<evidence type="ECO:0000305" key="11"/>
<evidence type="ECO:0007829" key="12">
    <source>
        <dbReference type="PDB" id="1QK1"/>
    </source>
</evidence>
<dbReference type="EC" id="2.7.3.2"/>
<dbReference type="EMBL" id="J04469">
    <property type="protein sequence ID" value="AAA98744.1"/>
    <property type="molecule type" value="Genomic_DNA"/>
</dbReference>
<dbReference type="EMBL" id="BT006628">
    <property type="protein sequence ID" value="AAP35274.1"/>
    <property type="molecule type" value="mRNA"/>
</dbReference>
<dbReference type="EMBL" id="AK295776">
    <property type="protein sequence ID" value="BAG58600.1"/>
    <property type="molecule type" value="mRNA"/>
</dbReference>
<dbReference type="EMBL" id="AK223365">
    <property type="protein sequence ID" value="BAD97085.1"/>
    <property type="molecule type" value="mRNA"/>
</dbReference>
<dbReference type="EMBL" id="AK316124">
    <property type="protein sequence ID" value="BAH14495.1"/>
    <property type="molecule type" value="mRNA"/>
</dbReference>
<dbReference type="EMBL" id="AK316319">
    <property type="protein sequence ID" value="BAH14690.1"/>
    <property type="molecule type" value="mRNA"/>
</dbReference>
<dbReference type="EMBL" id="BC001926">
    <property type="protein sequence ID" value="AAH01926.1"/>
    <property type="molecule type" value="mRNA"/>
</dbReference>
<dbReference type="EMBL" id="BC006467">
    <property type="protein sequence ID" value="AAH06467.1"/>
    <property type="molecule type" value="mRNA"/>
</dbReference>
<dbReference type="EMBL" id="BC108652">
    <property type="protein sequence ID" value="AAI08653.1"/>
    <property type="molecule type" value="mRNA"/>
</dbReference>
<dbReference type="EMBL" id="BC121001">
    <property type="protein sequence ID" value="AAI21002.1"/>
    <property type="molecule type" value="mRNA"/>
</dbReference>
<dbReference type="EMBL" id="BC121002">
    <property type="protein sequence ID" value="AAI21003.1"/>
    <property type="molecule type" value="mRNA"/>
</dbReference>
<dbReference type="CCDS" id="CCDS10097.1">
    <molecule id="P12532-1"/>
</dbReference>
<dbReference type="CCDS" id="CCDS32217.1">
    <molecule id="P12532-1"/>
</dbReference>
<dbReference type="PIR" id="A31431">
    <property type="entry name" value="A30789"/>
</dbReference>
<dbReference type="RefSeq" id="NP_001015001.1">
    <molecule id="P12532-1"/>
    <property type="nucleotide sequence ID" value="NM_001015001.2"/>
</dbReference>
<dbReference type="RefSeq" id="NP_001308855.1">
    <molecule id="P12532-1"/>
    <property type="nucleotide sequence ID" value="NM_001321926.2"/>
</dbReference>
<dbReference type="RefSeq" id="NP_001308856.1">
    <molecule id="P12532-2"/>
    <property type="nucleotide sequence ID" value="NM_001321927.1"/>
</dbReference>
<dbReference type="RefSeq" id="NP_001308857.1">
    <molecule id="P12532-2"/>
    <property type="nucleotide sequence ID" value="NM_001321928.1"/>
</dbReference>
<dbReference type="RefSeq" id="NP_066270.1">
    <molecule id="P12532-1"/>
    <property type="nucleotide sequence ID" value="NM_020990.4"/>
</dbReference>
<dbReference type="RefSeq" id="XP_011519496.1">
    <molecule id="P12532-2"/>
    <property type="nucleotide sequence ID" value="XM_011521194.1"/>
</dbReference>
<dbReference type="RefSeq" id="XP_011519497.1">
    <molecule id="P12532-2"/>
    <property type="nucleotide sequence ID" value="XM_011521195.2"/>
</dbReference>
<dbReference type="RefSeq" id="XP_011519498.1">
    <molecule id="P12532-2"/>
    <property type="nucleotide sequence ID" value="XM_011521196.1"/>
</dbReference>
<dbReference type="RefSeq" id="XP_011519499.1">
    <property type="nucleotide sequence ID" value="XM_011521197.2"/>
</dbReference>
<dbReference type="RefSeq" id="XP_016877858.1">
    <molecule id="P12532-2"/>
    <property type="nucleotide sequence ID" value="XM_017022369.2"/>
</dbReference>
<dbReference type="RefSeq" id="XP_016877859.1">
    <molecule id="P12532-2"/>
    <property type="nucleotide sequence ID" value="XM_017022370.2"/>
</dbReference>
<dbReference type="RefSeq" id="XP_047288710.1">
    <molecule id="P12532-1"/>
    <property type="nucleotide sequence ID" value="XM_047432754.1"/>
</dbReference>
<dbReference type="RefSeq" id="XP_047288711.1">
    <molecule id="P12532-1"/>
    <property type="nucleotide sequence ID" value="XM_047432755.1"/>
</dbReference>
<dbReference type="RefSeq" id="XP_054234266.1">
    <molecule id="P12532-2"/>
    <property type="nucleotide sequence ID" value="XM_054378291.1"/>
</dbReference>
<dbReference type="RefSeq" id="XP_054234267.1">
    <molecule id="P12532-2"/>
    <property type="nucleotide sequence ID" value="XM_054378292.1"/>
</dbReference>
<dbReference type="RefSeq" id="XP_054234268.1">
    <molecule id="P12532-1"/>
    <property type="nucleotide sequence ID" value="XM_054378293.1"/>
</dbReference>
<dbReference type="RefSeq" id="XP_054234269.1">
    <molecule id="P12532-1"/>
    <property type="nucleotide sequence ID" value="XM_054378294.1"/>
</dbReference>
<dbReference type="PDB" id="1QK1">
    <property type="method" value="X-ray"/>
    <property type="resolution" value="2.70 A"/>
    <property type="chains" value="A/B/C/D/E/F/G/H=39-417"/>
</dbReference>
<dbReference type="PDB" id="9B04">
    <property type="method" value="EM"/>
    <property type="resolution" value="2.52 A"/>
    <property type="chains" value="A/B/C/D/E/F/G/H=39-417"/>
</dbReference>
<dbReference type="PDB" id="9B05">
    <property type="method" value="EM"/>
    <property type="resolution" value="2.40 A"/>
    <property type="chains" value="A/B/C/D/E/F/G/H=39-417"/>
</dbReference>
<dbReference type="PDB" id="9B0T">
    <property type="method" value="EM"/>
    <property type="resolution" value="2.30 A"/>
    <property type="chains" value="A/B/C/D/E/F/G/H=39-417"/>
</dbReference>
<dbReference type="PDB" id="9B0U">
    <property type="method" value="EM"/>
    <property type="resolution" value="2.44 A"/>
    <property type="chains" value="A/B/C/D/E/F/G/H=39-417"/>
</dbReference>
<dbReference type="PDB" id="9B14">
    <property type="method" value="EM"/>
    <property type="resolution" value="2.20 A"/>
    <property type="chains" value="A/B/C/D/E/F/G/H=39-417"/>
</dbReference>
<dbReference type="PDB" id="9B16">
    <property type="method" value="EM"/>
    <property type="resolution" value="2.89 A"/>
    <property type="chains" value="A/B/C/D/E/F/G/H=39-417"/>
</dbReference>
<dbReference type="PDBsum" id="1QK1"/>
<dbReference type="PDBsum" id="9B04"/>
<dbReference type="PDBsum" id="9B05"/>
<dbReference type="PDBsum" id="9B0T"/>
<dbReference type="PDBsum" id="9B0U"/>
<dbReference type="PDBsum" id="9B14"/>
<dbReference type="PDBsum" id="9B16"/>
<dbReference type="EMDB" id="EMD-44028"/>
<dbReference type="EMDB" id="EMD-44029"/>
<dbReference type="EMDB" id="EMD-44055"/>
<dbReference type="EMDB" id="EMD-44058"/>
<dbReference type="EMDB" id="EMD-44068"/>
<dbReference type="EMDB" id="EMD-44069"/>
<dbReference type="SMR" id="P12532"/>
<dbReference type="BioGRID" id="107579">
    <property type="interactions" value="75"/>
</dbReference>
<dbReference type="BioGRID" id="139227">
    <property type="interactions" value="82"/>
</dbReference>
<dbReference type="FunCoup" id="P12532">
    <property type="interactions" value="393"/>
</dbReference>
<dbReference type="IntAct" id="P12532">
    <property type="interactions" value="68"/>
</dbReference>
<dbReference type="MINT" id="P12532"/>
<dbReference type="STRING" id="9606.ENSP00000300283"/>
<dbReference type="DrugBank" id="DB00787">
    <property type="generic name" value="Acyclovir"/>
</dbReference>
<dbReference type="DrugBank" id="DB00148">
    <property type="generic name" value="Creatine"/>
</dbReference>
<dbReference type="DrugBank" id="DB13191">
    <property type="generic name" value="Phosphocreatine"/>
</dbReference>
<dbReference type="DrugBank" id="DB00300">
    <property type="generic name" value="Tenofovir disoproxil"/>
</dbReference>
<dbReference type="GlyGen" id="P12532">
    <property type="glycosylation" value="1 site, 1 O-linked glycan (1 site)"/>
</dbReference>
<dbReference type="iPTMnet" id="P12532"/>
<dbReference type="PhosphoSitePlus" id="P12532"/>
<dbReference type="SwissPalm" id="P12532"/>
<dbReference type="BioMuta" id="CKMT1B"/>
<dbReference type="DMDM" id="125315"/>
<dbReference type="jPOST" id="P12532"/>
<dbReference type="MassIVE" id="P12532"/>
<dbReference type="PaxDb" id="9606-ENSP00000300283"/>
<dbReference type="PeptideAtlas" id="P12532"/>
<dbReference type="ProteomicsDB" id="52856">
    <molecule id="P12532-1"/>
</dbReference>
<dbReference type="ProteomicsDB" id="52857">
    <molecule id="P12532-2"/>
</dbReference>
<dbReference type="Pumba" id="P12532"/>
<dbReference type="Antibodypedia" id="23991">
    <property type="antibodies" value="274 antibodies from 32 providers"/>
</dbReference>
<dbReference type="Antibodypedia" id="65061">
    <property type="antibodies" value="152 antibodies from 12 providers"/>
</dbReference>
<dbReference type="DNASU" id="1159"/>
<dbReference type="Ensembl" id="ENST00000300283.10">
    <molecule id="P12532-1"/>
    <property type="protein sequence ID" value="ENSP00000300283.6"/>
    <property type="gene ID" value="ENSG00000237289.10"/>
</dbReference>
<dbReference type="Ensembl" id="ENST00000413453.7">
    <molecule id="P12532-1"/>
    <property type="protein sequence ID" value="ENSP00000406577.3"/>
    <property type="gene ID" value="ENSG00000223572.10"/>
</dbReference>
<dbReference type="Ensembl" id="ENST00000434505.5">
    <molecule id="P12532-1"/>
    <property type="protein sequence ID" value="ENSP00000413165.1"/>
    <property type="gene ID" value="ENSG00000223572.10"/>
</dbReference>
<dbReference type="Ensembl" id="ENST00000441322.6">
    <molecule id="P12532-1"/>
    <property type="protein sequence ID" value="ENSP00000413255.2"/>
    <property type="gene ID" value="ENSG00000237289.10"/>
</dbReference>
<dbReference type="GeneID" id="1159"/>
<dbReference type="GeneID" id="548596"/>
<dbReference type="KEGG" id="hsa:1159"/>
<dbReference type="KEGG" id="hsa:548596"/>
<dbReference type="MANE-Select" id="ENST00000413453.7">
    <property type="protein sequence ID" value="ENSP00000406577.3"/>
    <property type="RefSeq nucleotide sequence ID" value="NM_001321926.2"/>
    <property type="RefSeq protein sequence ID" value="NP_001308855.1"/>
</dbReference>
<dbReference type="MANE-Select" id="ENST00000441322.6">
    <property type="protein sequence ID" value="ENSP00000413255.2"/>
    <property type="RefSeq nucleotide sequence ID" value="NM_001375484.1"/>
    <property type="RefSeq protein sequence ID" value="NP_001362413.1"/>
</dbReference>
<dbReference type="UCSC" id="uc001zsc.3">
    <molecule id="P12532-1"/>
    <property type="organism name" value="human"/>
</dbReference>
<dbReference type="AGR" id="HGNC:1995"/>
<dbReference type="AGR" id="HGNC:31736"/>
<dbReference type="CTD" id="1159"/>
<dbReference type="CTD" id="548596"/>
<dbReference type="DisGeNET" id="1159"/>
<dbReference type="DisGeNET" id="548596"/>
<dbReference type="GeneCards" id="CKMT1A"/>
<dbReference type="GeneCards" id="CKMT1B"/>
<dbReference type="HGNC" id="HGNC:31736">
    <property type="gene designation" value="CKMT1A"/>
</dbReference>
<dbReference type="HGNC" id="HGNC:1995">
    <property type="gene designation" value="CKMT1B"/>
</dbReference>
<dbReference type="HPA" id="ENSG00000223572">
    <property type="expression patterns" value="Tissue enhanced (brain, esophagus, intestine)"/>
</dbReference>
<dbReference type="HPA" id="ENSG00000237289">
    <property type="expression patterns" value="Tissue enhanced (brain, esophagus, intestine)"/>
</dbReference>
<dbReference type="MIM" id="123290">
    <property type="type" value="gene"/>
</dbReference>
<dbReference type="MIM" id="613415">
    <property type="type" value="gene"/>
</dbReference>
<dbReference type="neXtProt" id="NX_P12532"/>
<dbReference type="OpenTargets" id="ENSG00000223572"/>
<dbReference type="OpenTargets" id="ENSG00000237289"/>
<dbReference type="PharmGKB" id="PA142672108"/>
<dbReference type="VEuPathDB" id="HostDB:ENSG00000223572"/>
<dbReference type="VEuPathDB" id="HostDB:ENSG00000237289"/>
<dbReference type="eggNOG" id="KOG3581">
    <property type="taxonomic scope" value="Eukaryota"/>
</dbReference>
<dbReference type="GeneTree" id="ENSGT00950000182772"/>
<dbReference type="HOGENOM" id="CLU_019868_4_2_1"/>
<dbReference type="InParanoid" id="P12532"/>
<dbReference type="OMA" id="YLHSCPT"/>
<dbReference type="OrthoDB" id="430219at2759"/>
<dbReference type="PAN-GO" id="P12532">
    <property type="GO annotations" value="3 GO annotations based on evolutionary models"/>
</dbReference>
<dbReference type="PhylomeDB" id="P12532"/>
<dbReference type="TreeFam" id="TF314214"/>
<dbReference type="BioCyc" id="MetaCyc:HS09820-MONOMER"/>
<dbReference type="BRENDA" id="2.7.3.2">
    <property type="organism ID" value="2681"/>
</dbReference>
<dbReference type="PathwayCommons" id="P12532"/>
<dbReference type="Reactome" id="R-HSA-71288">
    <property type="pathway name" value="Creatine metabolism"/>
</dbReference>
<dbReference type="SignaLink" id="P12532"/>
<dbReference type="SIGNOR" id="P12532"/>
<dbReference type="BioGRID-ORCS" id="1159">
    <property type="hits" value="13 hits in 668 CRISPR screens"/>
</dbReference>
<dbReference type="BioGRID-ORCS" id="548596">
    <property type="hits" value="9 hits in 356 CRISPR screens"/>
</dbReference>
<dbReference type="ChiTaRS" id="CKMT1A">
    <property type="organism name" value="human"/>
</dbReference>
<dbReference type="ChiTaRS" id="CKMT1B">
    <property type="organism name" value="human"/>
</dbReference>
<dbReference type="EvolutionaryTrace" id="P12532"/>
<dbReference type="GeneWiki" id="CKMT1B"/>
<dbReference type="Pharos" id="P12532">
    <property type="development level" value="Tbio"/>
</dbReference>
<dbReference type="PRO" id="PR:P12532"/>
<dbReference type="Proteomes" id="UP000005640">
    <property type="component" value="Chromosome 15"/>
</dbReference>
<dbReference type="RNAct" id="P12532">
    <property type="molecule type" value="protein"/>
</dbReference>
<dbReference type="Bgee" id="ENSG00000223572">
    <property type="expression patterns" value="Expressed in right hemisphere of cerebellum and 92 other cell types or tissues"/>
</dbReference>
<dbReference type="ExpressionAtlas" id="P12532">
    <property type="expression patterns" value="baseline and differential"/>
</dbReference>
<dbReference type="GO" id="GO:0005743">
    <property type="term" value="C:mitochondrial inner membrane"/>
    <property type="evidence" value="ECO:0000304"/>
    <property type="project" value="Reactome"/>
</dbReference>
<dbReference type="GO" id="GO:0005739">
    <property type="term" value="C:mitochondrion"/>
    <property type="evidence" value="ECO:0006056"/>
    <property type="project" value="FlyBase"/>
</dbReference>
<dbReference type="GO" id="GO:0005524">
    <property type="term" value="F:ATP binding"/>
    <property type="evidence" value="ECO:0007669"/>
    <property type="project" value="UniProtKB-KW"/>
</dbReference>
<dbReference type="GO" id="GO:0004111">
    <property type="term" value="F:creatine kinase activity"/>
    <property type="evidence" value="ECO:0000318"/>
    <property type="project" value="GO_Central"/>
</dbReference>
<dbReference type="GO" id="GO:0046314">
    <property type="term" value="P:phosphocreatine biosynthetic process"/>
    <property type="evidence" value="ECO:0000318"/>
    <property type="project" value="GO_Central"/>
</dbReference>
<dbReference type="CDD" id="cd00716">
    <property type="entry name" value="creatine_kinase_like"/>
    <property type="match status" value="1"/>
</dbReference>
<dbReference type="FunFam" id="3.30.590.10:FF:000002">
    <property type="entry name" value="Creatine kinase S-type, mitochondrial"/>
    <property type="match status" value="1"/>
</dbReference>
<dbReference type="FunFam" id="1.10.135.10:FF:000002">
    <property type="entry name" value="creatine kinase S-type, mitochondrial"/>
    <property type="match status" value="1"/>
</dbReference>
<dbReference type="Gene3D" id="1.10.135.10">
    <property type="entry name" value="ATP:guanido phosphotransferase, N-terminal domain"/>
    <property type="match status" value="1"/>
</dbReference>
<dbReference type="Gene3D" id="3.30.590.10">
    <property type="entry name" value="Glutamine synthetase/guanido kinase, catalytic domain"/>
    <property type="match status" value="1"/>
</dbReference>
<dbReference type="InterPro" id="IPR000749">
    <property type="entry name" value="ATP-guanido_PTrfase"/>
</dbReference>
<dbReference type="InterPro" id="IPR022415">
    <property type="entry name" value="ATP-guanido_PTrfase_AS"/>
</dbReference>
<dbReference type="InterPro" id="IPR022414">
    <property type="entry name" value="ATP-guanido_PTrfase_cat"/>
</dbReference>
<dbReference type="InterPro" id="IPR022413">
    <property type="entry name" value="ATP-guanido_PTrfase_N"/>
</dbReference>
<dbReference type="InterPro" id="IPR036802">
    <property type="entry name" value="ATP-guanido_PTrfase_N_sf"/>
</dbReference>
<dbReference type="InterPro" id="IPR014746">
    <property type="entry name" value="Gln_synth/guanido_kin_cat_dom"/>
</dbReference>
<dbReference type="PANTHER" id="PTHR11547">
    <property type="entry name" value="ARGININE OR CREATINE KINASE"/>
    <property type="match status" value="1"/>
</dbReference>
<dbReference type="PANTHER" id="PTHR11547:SF24">
    <property type="entry name" value="CREATINE KINASE U-TYPE, MITOCHONDRIAL"/>
    <property type="match status" value="1"/>
</dbReference>
<dbReference type="Pfam" id="PF00217">
    <property type="entry name" value="ATP-gua_Ptrans"/>
    <property type="match status" value="1"/>
</dbReference>
<dbReference type="Pfam" id="PF02807">
    <property type="entry name" value="ATP-gua_PtransN"/>
    <property type="match status" value="1"/>
</dbReference>
<dbReference type="SUPFAM" id="SSF55931">
    <property type="entry name" value="Glutamine synthetase/guanido kinase"/>
    <property type="match status" value="1"/>
</dbReference>
<dbReference type="SUPFAM" id="SSF48034">
    <property type="entry name" value="Guanido kinase N-terminal domain"/>
    <property type="match status" value="1"/>
</dbReference>
<dbReference type="PROSITE" id="PS00112">
    <property type="entry name" value="PHOSPHAGEN_KINASE"/>
    <property type="match status" value="1"/>
</dbReference>
<dbReference type="PROSITE" id="PS51510">
    <property type="entry name" value="PHOSPHAGEN_KINASE_C"/>
    <property type="match status" value="1"/>
</dbReference>
<dbReference type="PROSITE" id="PS51509">
    <property type="entry name" value="PHOSPHAGEN_KINASE_N"/>
    <property type="match status" value="1"/>
</dbReference>